<organism>
    <name type="scientific">Mus musculus</name>
    <name type="common">Mouse</name>
    <dbReference type="NCBI Taxonomy" id="10090"/>
    <lineage>
        <taxon>Eukaryota</taxon>
        <taxon>Metazoa</taxon>
        <taxon>Chordata</taxon>
        <taxon>Craniata</taxon>
        <taxon>Vertebrata</taxon>
        <taxon>Euteleostomi</taxon>
        <taxon>Mammalia</taxon>
        <taxon>Eutheria</taxon>
        <taxon>Euarchontoglires</taxon>
        <taxon>Glires</taxon>
        <taxon>Rodentia</taxon>
        <taxon>Myomorpha</taxon>
        <taxon>Muroidea</taxon>
        <taxon>Muridae</taxon>
        <taxon>Murinae</taxon>
        <taxon>Mus</taxon>
        <taxon>Mus</taxon>
    </lineage>
</organism>
<name>PKR2_MOUSE</name>
<dbReference type="EMBL" id="AF487279">
    <property type="protein sequence ID" value="AAM49571.1"/>
    <property type="molecule type" value="mRNA"/>
</dbReference>
<dbReference type="EMBL" id="AK030458">
    <property type="protein sequence ID" value="BAC26971.1"/>
    <property type="status" value="ALT_INIT"/>
    <property type="molecule type" value="mRNA"/>
</dbReference>
<dbReference type="EMBL" id="AK041586">
    <property type="protein sequence ID" value="BAC30994.1"/>
    <property type="molecule type" value="mRNA"/>
</dbReference>
<dbReference type="EMBL" id="AK080980">
    <property type="protein sequence ID" value="BAC38103.1"/>
    <property type="molecule type" value="mRNA"/>
</dbReference>
<dbReference type="EMBL" id="AL807793">
    <property type="status" value="NOT_ANNOTATED_CDS"/>
    <property type="molecule type" value="Genomic_DNA"/>
</dbReference>
<dbReference type="EMBL" id="BC043116">
    <property type="protein sequence ID" value="AAH43116.1"/>
    <property type="molecule type" value="mRNA"/>
</dbReference>
<dbReference type="CCDS" id="CCDS16773.1"/>
<dbReference type="RefSeq" id="NP_659193.3">
    <property type="nucleotide sequence ID" value="NM_144944.3"/>
</dbReference>
<dbReference type="RefSeq" id="XP_011237857.1">
    <property type="nucleotide sequence ID" value="XM_011239555.3"/>
</dbReference>
<dbReference type="SMR" id="Q8K458"/>
<dbReference type="BioGRID" id="232923">
    <property type="interactions" value="1"/>
</dbReference>
<dbReference type="FunCoup" id="Q8K458">
    <property type="interactions" value="1017"/>
</dbReference>
<dbReference type="STRING" id="10090.ENSMUSP00000056659"/>
<dbReference type="GlyCosmos" id="Q8K458">
    <property type="glycosylation" value="2 sites, No reported glycans"/>
</dbReference>
<dbReference type="GlyGen" id="Q8K458">
    <property type="glycosylation" value="2 sites"/>
</dbReference>
<dbReference type="PhosphoSitePlus" id="Q8K458"/>
<dbReference type="PaxDb" id="10090-ENSMUSP00000056659"/>
<dbReference type="TopDownProteomics" id="Q8K458"/>
<dbReference type="Antibodypedia" id="8176">
    <property type="antibodies" value="236 antibodies from 32 providers"/>
</dbReference>
<dbReference type="DNASU" id="246313"/>
<dbReference type="Ensembl" id="ENSMUST00000049997.14">
    <property type="protein sequence ID" value="ENSMUSP00000056659.8"/>
    <property type="gene ID" value="ENSMUSG00000050558.14"/>
</dbReference>
<dbReference type="Ensembl" id="ENSMUST00000110156.2">
    <property type="protein sequence ID" value="ENSMUSP00000105784.2"/>
    <property type="gene ID" value="ENSMUSG00000050558.14"/>
</dbReference>
<dbReference type="GeneID" id="246313"/>
<dbReference type="KEGG" id="mmu:246313"/>
<dbReference type="UCSC" id="uc008mmp.2">
    <property type="organism name" value="mouse"/>
</dbReference>
<dbReference type="AGR" id="MGI:2181363"/>
<dbReference type="CTD" id="128674"/>
<dbReference type="MGI" id="MGI:2181363">
    <property type="gene designation" value="Prokr2"/>
</dbReference>
<dbReference type="VEuPathDB" id="HostDB:ENSMUSG00000050558"/>
<dbReference type="eggNOG" id="KOG3656">
    <property type="taxonomic scope" value="Eukaryota"/>
</dbReference>
<dbReference type="GeneTree" id="ENSGT00940000154544"/>
<dbReference type="HOGENOM" id="CLU_009579_6_0_1"/>
<dbReference type="InParanoid" id="Q8K458"/>
<dbReference type="OMA" id="YPHGGTT"/>
<dbReference type="OrthoDB" id="10053194at2759"/>
<dbReference type="PhylomeDB" id="Q8K458"/>
<dbReference type="TreeFam" id="TF315303"/>
<dbReference type="Reactome" id="R-MMU-375276">
    <property type="pathway name" value="Peptide ligand-binding receptors"/>
</dbReference>
<dbReference type="Reactome" id="R-MMU-416476">
    <property type="pathway name" value="G alpha (q) signalling events"/>
</dbReference>
<dbReference type="BioGRID-ORCS" id="246313">
    <property type="hits" value="0 hits in 76 CRISPR screens"/>
</dbReference>
<dbReference type="PRO" id="PR:Q8K458"/>
<dbReference type="Proteomes" id="UP000000589">
    <property type="component" value="Chromosome 2"/>
</dbReference>
<dbReference type="RNAct" id="Q8K458">
    <property type="molecule type" value="protein"/>
</dbReference>
<dbReference type="Bgee" id="ENSMUSG00000050558">
    <property type="expression patterns" value="Expressed in rostral migratory stream and 77 other cell types or tissues"/>
</dbReference>
<dbReference type="ExpressionAtlas" id="Q8K458">
    <property type="expression patterns" value="baseline and differential"/>
</dbReference>
<dbReference type="GO" id="GO:0005886">
    <property type="term" value="C:plasma membrane"/>
    <property type="evidence" value="ECO:0000250"/>
    <property type="project" value="UniProtKB"/>
</dbReference>
<dbReference type="GO" id="GO:0004930">
    <property type="term" value="F:G protein-coupled receptor activity"/>
    <property type="evidence" value="ECO:0000304"/>
    <property type="project" value="MGI"/>
</dbReference>
<dbReference type="GO" id="GO:0004983">
    <property type="term" value="F:neuropeptide Y receptor activity"/>
    <property type="evidence" value="ECO:0007669"/>
    <property type="project" value="InterPro"/>
</dbReference>
<dbReference type="GO" id="GO:0007623">
    <property type="term" value="P:circadian rhythm"/>
    <property type="evidence" value="ECO:0000314"/>
    <property type="project" value="MGI"/>
</dbReference>
<dbReference type="GO" id="GO:0007186">
    <property type="term" value="P:G protein-coupled receptor signaling pathway"/>
    <property type="evidence" value="ECO:0000304"/>
    <property type="project" value="MGI"/>
</dbReference>
<dbReference type="CDD" id="cd15204">
    <property type="entry name" value="7tmA_prokineticin-R"/>
    <property type="match status" value="1"/>
</dbReference>
<dbReference type="FunFam" id="1.20.1070.10:FF:000069">
    <property type="entry name" value="Prokineticin receptor 2"/>
    <property type="match status" value="1"/>
</dbReference>
<dbReference type="Gene3D" id="1.20.1070.10">
    <property type="entry name" value="Rhodopsin 7-helix transmembrane proteins"/>
    <property type="match status" value="1"/>
</dbReference>
<dbReference type="InterPro" id="IPR000276">
    <property type="entry name" value="GPCR_Rhodpsn"/>
</dbReference>
<dbReference type="InterPro" id="IPR017452">
    <property type="entry name" value="GPCR_Rhodpsn_7TM"/>
</dbReference>
<dbReference type="InterPro" id="IPR000611">
    <property type="entry name" value="NPY_rcpt"/>
</dbReference>
<dbReference type="PANTHER" id="PTHR24238">
    <property type="entry name" value="G-PROTEIN COUPLED RECEPTOR"/>
    <property type="match status" value="1"/>
</dbReference>
<dbReference type="PANTHER" id="PTHR24238:SF74">
    <property type="entry name" value="PROKINETICIN RECEPTOR 2"/>
    <property type="match status" value="1"/>
</dbReference>
<dbReference type="Pfam" id="PF00001">
    <property type="entry name" value="7tm_1"/>
    <property type="match status" value="1"/>
</dbReference>
<dbReference type="PRINTS" id="PR00237">
    <property type="entry name" value="GPCRRHODOPSN"/>
</dbReference>
<dbReference type="PRINTS" id="PR01012">
    <property type="entry name" value="NRPEPTIDEYR"/>
</dbReference>
<dbReference type="SUPFAM" id="SSF81321">
    <property type="entry name" value="Family A G protein-coupled receptor-like"/>
    <property type="match status" value="1"/>
</dbReference>
<dbReference type="PROSITE" id="PS00237">
    <property type="entry name" value="G_PROTEIN_RECEP_F1_1"/>
    <property type="match status" value="1"/>
</dbReference>
<dbReference type="PROSITE" id="PS50262">
    <property type="entry name" value="G_PROTEIN_RECEP_F1_2"/>
    <property type="match status" value="1"/>
</dbReference>
<proteinExistence type="evidence at transcript level"/>
<feature type="chain" id="PRO_0000070084" description="Prokineticin receptor 2">
    <location>
        <begin position="1"/>
        <end position="381"/>
    </location>
</feature>
<feature type="topological domain" description="Extracellular" evidence="3">
    <location>
        <begin position="1"/>
        <end position="51"/>
    </location>
</feature>
<feature type="transmembrane region" description="Helical; Name=1" evidence="3">
    <location>
        <begin position="52"/>
        <end position="72"/>
    </location>
</feature>
<feature type="topological domain" description="Cytoplasmic" evidence="3">
    <location>
        <begin position="73"/>
        <end position="86"/>
    </location>
</feature>
<feature type="transmembrane region" description="Helical; Name=2" evidence="3">
    <location>
        <begin position="87"/>
        <end position="107"/>
    </location>
</feature>
<feature type="topological domain" description="Extracellular" evidence="3">
    <location>
        <begin position="108"/>
        <end position="133"/>
    </location>
</feature>
<feature type="transmembrane region" description="Helical; Name=3" evidence="3">
    <location>
        <begin position="134"/>
        <end position="154"/>
    </location>
</feature>
<feature type="topological domain" description="Cytoplasmic" evidence="3">
    <location>
        <begin position="155"/>
        <end position="168"/>
    </location>
</feature>
<feature type="transmembrane region" description="Helical; Name=4" evidence="3">
    <location>
        <begin position="169"/>
        <end position="189"/>
    </location>
</feature>
<feature type="topological domain" description="Extracellular" evidence="3">
    <location>
        <begin position="190"/>
        <end position="220"/>
    </location>
</feature>
<feature type="transmembrane region" description="Helical; Name=5" evidence="3">
    <location>
        <begin position="221"/>
        <end position="241"/>
    </location>
</feature>
<feature type="topological domain" description="Cytoplasmic" evidence="3">
    <location>
        <begin position="242"/>
        <end position="270"/>
    </location>
</feature>
<feature type="transmembrane region" description="Helical; Name=6" evidence="3">
    <location>
        <begin position="271"/>
        <end position="291"/>
    </location>
</feature>
<feature type="topological domain" description="Extracellular" evidence="3">
    <location>
        <begin position="292"/>
        <end position="310"/>
    </location>
</feature>
<feature type="transmembrane region" description="Helical; Name=7" evidence="3">
    <location>
        <begin position="311"/>
        <end position="331"/>
    </location>
</feature>
<feature type="topological domain" description="Cytoplasmic" evidence="3">
    <location>
        <begin position="332"/>
        <end position="381"/>
    </location>
</feature>
<feature type="glycosylation site" description="N-linked (GlcNAc...) asparagine" evidence="3">
    <location>
        <position position="7"/>
    </location>
</feature>
<feature type="glycosylation site" description="N-linked (GlcNAc...) asparagine" evidence="3">
    <location>
        <position position="24"/>
    </location>
</feature>
<feature type="disulfide bond" evidence="4">
    <location>
        <begin position="125"/>
        <end position="205"/>
    </location>
</feature>
<feature type="sequence conflict" description="In Ref. 4; AAH43116." evidence="5" ref="4">
    <original>S</original>
    <variation>P</variation>
    <location>
        <position position="244"/>
    </location>
</feature>
<feature type="sequence conflict" description="In Ref. 2; BAC26971." evidence="5" ref="2">
    <original>V</original>
    <variation>L</variation>
    <location>
        <position position="375"/>
    </location>
</feature>
<accession>Q8K458</accession>
<accession>A2AMQ8</accession>
<accession>Q80XQ0</accession>
<accession>Q8BIR4</accession>
<sequence length="381" mass="43375">MGPQNRNTSFAPDLNPPQDHVSLNYSYGDYDLPLGEDEDVTKTQTFFAAKIVIGVALAGIMLVCGIGNFVFIAALARYKKLRNLTNLLIANLAISDFLVAIVCCPFEMDYYVVRQLSWAHGHVLCASVNYLRTVSLYVSTNALLAIAIDRYLAIVHPLKPRMNYQTASFLIALVWMVSILIAVPSAYFTTETILVIVKNQEKIFCGQIWSVDQQLYYKSYFLFVFGLEFVGPVVTMTLCYARISQELWFKAVPGFQTEQIRKRLRCRRKTVLLLMGILTAYVLCWAPFYGFTIVRDFFPTVVVKEKHYLTAFYVVECIAMSNSMINTICFVTVKNNTMKYFKKMLRLHWRPSHYGSKSSADLDLKTSGVPATEEVDCIRLK</sequence>
<evidence type="ECO:0000250" key="1"/>
<evidence type="ECO:0000250" key="2">
    <source>
        <dbReference type="UniProtKB" id="Q8NFJ6"/>
    </source>
</evidence>
<evidence type="ECO:0000255" key="3"/>
<evidence type="ECO:0000255" key="4">
    <source>
        <dbReference type="PROSITE-ProRule" id="PRU00521"/>
    </source>
</evidence>
<evidence type="ECO:0000305" key="5"/>
<gene>
    <name type="primary">Prokr2</name>
    <name type="synonym">Gpr73l1</name>
    <name type="synonym">Pkr2</name>
</gene>
<keyword id="KW-1003">Cell membrane</keyword>
<keyword id="KW-1015">Disulfide bond</keyword>
<keyword id="KW-0297">G-protein coupled receptor</keyword>
<keyword id="KW-0325">Glycoprotein</keyword>
<keyword id="KW-0472">Membrane</keyword>
<keyword id="KW-0675">Receptor</keyword>
<keyword id="KW-1185">Reference proteome</keyword>
<keyword id="KW-0807">Transducer</keyword>
<keyword id="KW-0812">Transmembrane</keyword>
<keyword id="KW-1133">Transmembrane helix</keyword>
<protein>
    <recommendedName>
        <fullName>Prokineticin receptor 2</fullName>
        <shortName>PK-R2</shortName>
    </recommendedName>
    <alternativeName>
        <fullName>G-protein coupled receptor 73-like 1</fullName>
    </alternativeName>
</protein>
<reference key="1">
    <citation type="journal article" date="2002" name="Nature">
        <title>Prokineticin 2 transmits the behavioural circadian rhythm of the suprachiasmatic nucleus.</title>
        <authorList>
            <person name="Cheng M.Y."/>
            <person name="Bullock C.M."/>
            <person name="Li C."/>
            <person name="Lee A.G."/>
            <person name="Bermak J.C."/>
            <person name="Belluzzi J."/>
            <person name="Weaver D.R."/>
            <person name="Leslie F.M."/>
            <person name="Zhou Q.-Y."/>
        </authorList>
    </citation>
    <scope>NUCLEOTIDE SEQUENCE [MRNA]</scope>
    <source>
        <strain>C57BL/6J</strain>
    </source>
</reference>
<reference key="2">
    <citation type="journal article" date="2005" name="Science">
        <title>The transcriptional landscape of the mammalian genome.</title>
        <authorList>
            <person name="Carninci P."/>
            <person name="Kasukawa T."/>
            <person name="Katayama S."/>
            <person name="Gough J."/>
            <person name="Frith M.C."/>
            <person name="Maeda N."/>
            <person name="Oyama R."/>
            <person name="Ravasi T."/>
            <person name="Lenhard B."/>
            <person name="Wells C."/>
            <person name="Kodzius R."/>
            <person name="Shimokawa K."/>
            <person name="Bajic V.B."/>
            <person name="Brenner S.E."/>
            <person name="Batalov S."/>
            <person name="Forrest A.R."/>
            <person name="Zavolan M."/>
            <person name="Davis M.J."/>
            <person name="Wilming L.G."/>
            <person name="Aidinis V."/>
            <person name="Allen J.E."/>
            <person name="Ambesi-Impiombato A."/>
            <person name="Apweiler R."/>
            <person name="Aturaliya R.N."/>
            <person name="Bailey T.L."/>
            <person name="Bansal M."/>
            <person name="Baxter L."/>
            <person name="Beisel K.W."/>
            <person name="Bersano T."/>
            <person name="Bono H."/>
            <person name="Chalk A.M."/>
            <person name="Chiu K.P."/>
            <person name="Choudhary V."/>
            <person name="Christoffels A."/>
            <person name="Clutterbuck D.R."/>
            <person name="Crowe M.L."/>
            <person name="Dalla E."/>
            <person name="Dalrymple B.P."/>
            <person name="de Bono B."/>
            <person name="Della Gatta G."/>
            <person name="di Bernardo D."/>
            <person name="Down T."/>
            <person name="Engstrom P."/>
            <person name="Fagiolini M."/>
            <person name="Faulkner G."/>
            <person name="Fletcher C.F."/>
            <person name="Fukushima T."/>
            <person name="Furuno M."/>
            <person name="Futaki S."/>
            <person name="Gariboldi M."/>
            <person name="Georgii-Hemming P."/>
            <person name="Gingeras T.R."/>
            <person name="Gojobori T."/>
            <person name="Green R.E."/>
            <person name="Gustincich S."/>
            <person name="Harbers M."/>
            <person name="Hayashi Y."/>
            <person name="Hensch T.K."/>
            <person name="Hirokawa N."/>
            <person name="Hill D."/>
            <person name="Huminiecki L."/>
            <person name="Iacono M."/>
            <person name="Ikeo K."/>
            <person name="Iwama A."/>
            <person name="Ishikawa T."/>
            <person name="Jakt M."/>
            <person name="Kanapin A."/>
            <person name="Katoh M."/>
            <person name="Kawasawa Y."/>
            <person name="Kelso J."/>
            <person name="Kitamura H."/>
            <person name="Kitano H."/>
            <person name="Kollias G."/>
            <person name="Krishnan S.P."/>
            <person name="Kruger A."/>
            <person name="Kummerfeld S.K."/>
            <person name="Kurochkin I.V."/>
            <person name="Lareau L.F."/>
            <person name="Lazarevic D."/>
            <person name="Lipovich L."/>
            <person name="Liu J."/>
            <person name="Liuni S."/>
            <person name="McWilliam S."/>
            <person name="Madan Babu M."/>
            <person name="Madera M."/>
            <person name="Marchionni L."/>
            <person name="Matsuda H."/>
            <person name="Matsuzawa S."/>
            <person name="Miki H."/>
            <person name="Mignone F."/>
            <person name="Miyake S."/>
            <person name="Morris K."/>
            <person name="Mottagui-Tabar S."/>
            <person name="Mulder N."/>
            <person name="Nakano N."/>
            <person name="Nakauchi H."/>
            <person name="Ng P."/>
            <person name="Nilsson R."/>
            <person name="Nishiguchi S."/>
            <person name="Nishikawa S."/>
            <person name="Nori F."/>
            <person name="Ohara O."/>
            <person name="Okazaki Y."/>
            <person name="Orlando V."/>
            <person name="Pang K.C."/>
            <person name="Pavan W.J."/>
            <person name="Pavesi G."/>
            <person name="Pesole G."/>
            <person name="Petrovsky N."/>
            <person name="Piazza S."/>
            <person name="Reed J."/>
            <person name="Reid J.F."/>
            <person name="Ring B.Z."/>
            <person name="Ringwald M."/>
            <person name="Rost B."/>
            <person name="Ruan Y."/>
            <person name="Salzberg S.L."/>
            <person name="Sandelin A."/>
            <person name="Schneider C."/>
            <person name="Schoenbach C."/>
            <person name="Sekiguchi K."/>
            <person name="Semple C.A."/>
            <person name="Seno S."/>
            <person name="Sessa L."/>
            <person name="Sheng Y."/>
            <person name="Shibata Y."/>
            <person name="Shimada H."/>
            <person name="Shimada K."/>
            <person name="Silva D."/>
            <person name="Sinclair B."/>
            <person name="Sperling S."/>
            <person name="Stupka E."/>
            <person name="Sugiura K."/>
            <person name="Sultana R."/>
            <person name="Takenaka Y."/>
            <person name="Taki K."/>
            <person name="Tammoja K."/>
            <person name="Tan S.L."/>
            <person name="Tang S."/>
            <person name="Taylor M.S."/>
            <person name="Tegner J."/>
            <person name="Teichmann S.A."/>
            <person name="Ueda H.R."/>
            <person name="van Nimwegen E."/>
            <person name="Verardo R."/>
            <person name="Wei C.L."/>
            <person name="Yagi K."/>
            <person name="Yamanishi H."/>
            <person name="Zabarovsky E."/>
            <person name="Zhu S."/>
            <person name="Zimmer A."/>
            <person name="Hide W."/>
            <person name="Bult C."/>
            <person name="Grimmond S.M."/>
            <person name="Teasdale R.D."/>
            <person name="Liu E.T."/>
            <person name="Brusic V."/>
            <person name="Quackenbush J."/>
            <person name="Wahlestedt C."/>
            <person name="Mattick J.S."/>
            <person name="Hume D.A."/>
            <person name="Kai C."/>
            <person name="Sasaki D."/>
            <person name="Tomaru Y."/>
            <person name="Fukuda S."/>
            <person name="Kanamori-Katayama M."/>
            <person name="Suzuki M."/>
            <person name="Aoki J."/>
            <person name="Arakawa T."/>
            <person name="Iida J."/>
            <person name="Imamura K."/>
            <person name="Itoh M."/>
            <person name="Kato T."/>
            <person name="Kawaji H."/>
            <person name="Kawagashira N."/>
            <person name="Kawashima T."/>
            <person name="Kojima M."/>
            <person name="Kondo S."/>
            <person name="Konno H."/>
            <person name="Nakano K."/>
            <person name="Ninomiya N."/>
            <person name="Nishio T."/>
            <person name="Okada M."/>
            <person name="Plessy C."/>
            <person name="Shibata K."/>
            <person name="Shiraki T."/>
            <person name="Suzuki S."/>
            <person name="Tagami M."/>
            <person name="Waki K."/>
            <person name="Watahiki A."/>
            <person name="Okamura-Oho Y."/>
            <person name="Suzuki H."/>
            <person name="Kawai J."/>
            <person name="Hayashizaki Y."/>
        </authorList>
    </citation>
    <scope>NUCLEOTIDE SEQUENCE [LARGE SCALE MRNA]</scope>
    <source>
        <strain>C57BL/6J</strain>
        <tissue>Medulla oblongata</tissue>
        <tissue>Pituitary</tissue>
        <tissue>Thymus</tissue>
    </source>
</reference>
<reference key="3">
    <citation type="journal article" date="2009" name="PLoS Biol.">
        <title>Lineage-specific biology revealed by a finished genome assembly of the mouse.</title>
        <authorList>
            <person name="Church D.M."/>
            <person name="Goodstadt L."/>
            <person name="Hillier L.W."/>
            <person name="Zody M.C."/>
            <person name="Goldstein S."/>
            <person name="She X."/>
            <person name="Bult C.J."/>
            <person name="Agarwala R."/>
            <person name="Cherry J.L."/>
            <person name="DiCuccio M."/>
            <person name="Hlavina W."/>
            <person name="Kapustin Y."/>
            <person name="Meric P."/>
            <person name="Maglott D."/>
            <person name="Birtle Z."/>
            <person name="Marques A.C."/>
            <person name="Graves T."/>
            <person name="Zhou S."/>
            <person name="Teague B."/>
            <person name="Potamousis K."/>
            <person name="Churas C."/>
            <person name="Place M."/>
            <person name="Herschleb J."/>
            <person name="Runnheim R."/>
            <person name="Forrest D."/>
            <person name="Amos-Landgraf J."/>
            <person name="Schwartz D.C."/>
            <person name="Cheng Z."/>
            <person name="Lindblad-Toh K."/>
            <person name="Eichler E.E."/>
            <person name="Ponting C.P."/>
        </authorList>
    </citation>
    <scope>NUCLEOTIDE SEQUENCE [LARGE SCALE GENOMIC DNA]</scope>
    <source>
        <strain>C57BL/6J</strain>
    </source>
</reference>
<reference key="4">
    <citation type="journal article" date="2004" name="Genome Res.">
        <title>The status, quality, and expansion of the NIH full-length cDNA project: the Mammalian Gene Collection (MGC).</title>
        <authorList>
            <consortium name="The MGC Project Team"/>
        </authorList>
    </citation>
    <scope>NUCLEOTIDE SEQUENCE [LARGE SCALE MRNA]</scope>
    <source>
        <strain>C57BL/6J</strain>
        <tissue>Brain</tissue>
    </source>
</reference>
<comment type="function">
    <text evidence="1">Receptor for prokineticin 2. Exclusively coupled to the G(q) subclass of heteromeric G proteins. Activation leads to mobilization of calcium, stimulation of phosphoinositide turnover and activation of p44/p42 mitogen-activated protein kinase (By similarity).</text>
</comment>
<comment type="subunit">
    <text evidence="1">Homodimer.</text>
</comment>
<comment type="subcellular location">
    <subcellularLocation>
        <location evidence="2">Cell membrane</location>
        <topology>Multi-pass membrane protein</topology>
    </subcellularLocation>
</comment>
<comment type="tissue specificity">
    <text>Expressed in several regions of the brain, including paraventricular hypothalamic nucleus, dorsal medial hypothalamic nucleus, paratenial thalamic nuclei, paracentral thalamic nucleus, lateral habenular nucleus, lateral septal nucleus, lateral globus pallidus and amygdala. Highest expression seen in paraventricular thalamic nuclei and is also extensively expressed in the suprachiasmatic nucleus.</text>
</comment>
<comment type="similarity">
    <text evidence="4">Belongs to the G-protein coupled receptor 1 family.</text>
</comment>
<comment type="sequence caution" evidence="5">
    <conflict type="erroneous initiation">
        <sequence resource="EMBL-CDS" id="BAC26971"/>
    </conflict>
</comment>